<evidence type="ECO:0000255" key="1">
    <source>
        <dbReference type="HAMAP-Rule" id="MF_00558"/>
    </source>
</evidence>
<comment type="function">
    <text evidence="1">Succinyl-CoA synthetase functions in the citric acid cycle (TCA), coupling the hydrolysis of succinyl-CoA to the synthesis of either ATP or GTP and thus represents the only step of substrate-level phosphorylation in the TCA. The beta subunit provides nucleotide specificity of the enzyme and binds the substrate succinate, while the binding sites for coenzyme A and phosphate are found in the alpha subunit.</text>
</comment>
<comment type="catalytic activity">
    <reaction evidence="1">
        <text>succinate + ATP + CoA = succinyl-CoA + ADP + phosphate</text>
        <dbReference type="Rhea" id="RHEA:17661"/>
        <dbReference type="ChEBI" id="CHEBI:30031"/>
        <dbReference type="ChEBI" id="CHEBI:30616"/>
        <dbReference type="ChEBI" id="CHEBI:43474"/>
        <dbReference type="ChEBI" id="CHEBI:57287"/>
        <dbReference type="ChEBI" id="CHEBI:57292"/>
        <dbReference type="ChEBI" id="CHEBI:456216"/>
        <dbReference type="EC" id="6.2.1.5"/>
    </reaction>
    <physiologicalReaction direction="right-to-left" evidence="1">
        <dbReference type="Rhea" id="RHEA:17663"/>
    </physiologicalReaction>
</comment>
<comment type="catalytic activity">
    <reaction evidence="1">
        <text>GTP + succinate + CoA = succinyl-CoA + GDP + phosphate</text>
        <dbReference type="Rhea" id="RHEA:22120"/>
        <dbReference type="ChEBI" id="CHEBI:30031"/>
        <dbReference type="ChEBI" id="CHEBI:37565"/>
        <dbReference type="ChEBI" id="CHEBI:43474"/>
        <dbReference type="ChEBI" id="CHEBI:57287"/>
        <dbReference type="ChEBI" id="CHEBI:57292"/>
        <dbReference type="ChEBI" id="CHEBI:58189"/>
    </reaction>
    <physiologicalReaction direction="right-to-left" evidence="1">
        <dbReference type="Rhea" id="RHEA:22122"/>
    </physiologicalReaction>
</comment>
<comment type="cofactor">
    <cofactor evidence="1">
        <name>Mg(2+)</name>
        <dbReference type="ChEBI" id="CHEBI:18420"/>
    </cofactor>
    <text evidence="1">Binds 1 Mg(2+) ion per subunit.</text>
</comment>
<comment type="pathway">
    <text evidence="1">Carbohydrate metabolism; tricarboxylic acid cycle; succinate from succinyl-CoA (ligase route): step 1/1.</text>
</comment>
<comment type="subunit">
    <text evidence="1">Heterotetramer of two alpha and two beta subunits.</text>
</comment>
<comment type="similarity">
    <text evidence="1">Belongs to the succinate/malate CoA ligase beta subunit family.</text>
</comment>
<protein>
    <recommendedName>
        <fullName evidence="1">Succinate--CoA ligase [ADP-forming] subunit beta</fullName>
        <ecNumber evidence="1">6.2.1.5</ecNumber>
    </recommendedName>
    <alternativeName>
        <fullName evidence="1">Succinyl-CoA synthetase subunit beta</fullName>
        <shortName evidence="1">SCS-beta</shortName>
    </alternativeName>
</protein>
<feature type="chain" id="PRO_1000082174" description="Succinate--CoA ligase [ADP-forming] subunit beta">
    <location>
        <begin position="1"/>
        <end position="388"/>
    </location>
</feature>
<feature type="domain" description="ATP-grasp" evidence="1">
    <location>
        <begin position="9"/>
        <end position="244"/>
    </location>
</feature>
<feature type="binding site" evidence="1">
    <location>
        <position position="46"/>
    </location>
    <ligand>
        <name>ATP</name>
        <dbReference type="ChEBI" id="CHEBI:30616"/>
    </ligand>
</feature>
<feature type="binding site" evidence="1">
    <location>
        <begin position="53"/>
        <end position="55"/>
    </location>
    <ligand>
        <name>ATP</name>
        <dbReference type="ChEBI" id="CHEBI:30616"/>
    </ligand>
</feature>
<feature type="binding site" evidence="1">
    <location>
        <position position="99"/>
    </location>
    <ligand>
        <name>ATP</name>
        <dbReference type="ChEBI" id="CHEBI:30616"/>
    </ligand>
</feature>
<feature type="binding site" evidence="1">
    <location>
        <position position="102"/>
    </location>
    <ligand>
        <name>ATP</name>
        <dbReference type="ChEBI" id="CHEBI:30616"/>
    </ligand>
</feature>
<feature type="binding site" evidence="1">
    <location>
        <position position="107"/>
    </location>
    <ligand>
        <name>ATP</name>
        <dbReference type="ChEBI" id="CHEBI:30616"/>
    </ligand>
</feature>
<feature type="binding site" evidence="1">
    <location>
        <position position="199"/>
    </location>
    <ligand>
        <name>Mg(2+)</name>
        <dbReference type="ChEBI" id="CHEBI:18420"/>
    </ligand>
</feature>
<feature type="binding site" evidence="1">
    <location>
        <position position="213"/>
    </location>
    <ligand>
        <name>Mg(2+)</name>
        <dbReference type="ChEBI" id="CHEBI:18420"/>
    </ligand>
</feature>
<feature type="binding site" evidence="1">
    <location>
        <position position="264"/>
    </location>
    <ligand>
        <name>substrate</name>
        <note>ligand shared with subunit alpha</note>
    </ligand>
</feature>
<feature type="binding site" evidence="1">
    <location>
        <begin position="321"/>
        <end position="323"/>
    </location>
    <ligand>
        <name>substrate</name>
        <note>ligand shared with subunit alpha</note>
    </ligand>
</feature>
<dbReference type="EC" id="6.2.1.5" evidence="1"/>
<dbReference type="EMBL" id="CP000075">
    <property type="protein sequence ID" value="AAY37055.1"/>
    <property type="molecule type" value="Genomic_DNA"/>
</dbReference>
<dbReference type="RefSeq" id="WP_003316561.1">
    <property type="nucleotide sequence ID" value="NC_007005.1"/>
</dbReference>
<dbReference type="RefSeq" id="YP_235093.1">
    <property type="nucleotide sequence ID" value="NC_007005.1"/>
</dbReference>
<dbReference type="SMR" id="Q4ZUW7"/>
<dbReference type="STRING" id="205918.Psyr_2012"/>
<dbReference type="GeneID" id="77277876"/>
<dbReference type="KEGG" id="psb:Psyr_2012"/>
<dbReference type="PATRIC" id="fig|205918.7.peg.2055"/>
<dbReference type="eggNOG" id="COG0045">
    <property type="taxonomic scope" value="Bacteria"/>
</dbReference>
<dbReference type="HOGENOM" id="CLU_037430_0_2_6"/>
<dbReference type="OrthoDB" id="9802602at2"/>
<dbReference type="UniPathway" id="UPA00223">
    <property type="reaction ID" value="UER00999"/>
</dbReference>
<dbReference type="Proteomes" id="UP000000426">
    <property type="component" value="Chromosome"/>
</dbReference>
<dbReference type="GO" id="GO:0005829">
    <property type="term" value="C:cytosol"/>
    <property type="evidence" value="ECO:0007669"/>
    <property type="project" value="TreeGrafter"/>
</dbReference>
<dbReference type="GO" id="GO:0042709">
    <property type="term" value="C:succinate-CoA ligase complex"/>
    <property type="evidence" value="ECO:0007669"/>
    <property type="project" value="TreeGrafter"/>
</dbReference>
<dbReference type="GO" id="GO:0005524">
    <property type="term" value="F:ATP binding"/>
    <property type="evidence" value="ECO:0007669"/>
    <property type="project" value="UniProtKB-UniRule"/>
</dbReference>
<dbReference type="GO" id="GO:0000287">
    <property type="term" value="F:magnesium ion binding"/>
    <property type="evidence" value="ECO:0007669"/>
    <property type="project" value="UniProtKB-UniRule"/>
</dbReference>
<dbReference type="GO" id="GO:0004775">
    <property type="term" value="F:succinate-CoA ligase (ADP-forming) activity"/>
    <property type="evidence" value="ECO:0007669"/>
    <property type="project" value="UniProtKB-UniRule"/>
</dbReference>
<dbReference type="GO" id="GO:0004776">
    <property type="term" value="F:succinate-CoA ligase (GDP-forming) activity"/>
    <property type="evidence" value="ECO:0007669"/>
    <property type="project" value="RHEA"/>
</dbReference>
<dbReference type="GO" id="GO:0006104">
    <property type="term" value="P:succinyl-CoA metabolic process"/>
    <property type="evidence" value="ECO:0007669"/>
    <property type="project" value="TreeGrafter"/>
</dbReference>
<dbReference type="GO" id="GO:0006099">
    <property type="term" value="P:tricarboxylic acid cycle"/>
    <property type="evidence" value="ECO:0007669"/>
    <property type="project" value="UniProtKB-UniRule"/>
</dbReference>
<dbReference type="FunFam" id="3.30.1490.20:FF:000002">
    <property type="entry name" value="Succinate--CoA ligase [ADP-forming] subunit beta"/>
    <property type="match status" value="1"/>
</dbReference>
<dbReference type="FunFam" id="3.30.470.20:FF:000002">
    <property type="entry name" value="Succinate--CoA ligase [ADP-forming] subunit beta"/>
    <property type="match status" value="1"/>
</dbReference>
<dbReference type="FunFam" id="3.40.50.261:FF:000001">
    <property type="entry name" value="Succinate--CoA ligase [ADP-forming] subunit beta"/>
    <property type="match status" value="1"/>
</dbReference>
<dbReference type="Gene3D" id="3.30.1490.20">
    <property type="entry name" value="ATP-grasp fold, A domain"/>
    <property type="match status" value="1"/>
</dbReference>
<dbReference type="Gene3D" id="3.30.470.20">
    <property type="entry name" value="ATP-grasp fold, B domain"/>
    <property type="match status" value="1"/>
</dbReference>
<dbReference type="Gene3D" id="3.40.50.261">
    <property type="entry name" value="Succinyl-CoA synthetase domains"/>
    <property type="match status" value="1"/>
</dbReference>
<dbReference type="HAMAP" id="MF_00558">
    <property type="entry name" value="Succ_CoA_beta"/>
    <property type="match status" value="1"/>
</dbReference>
<dbReference type="InterPro" id="IPR011761">
    <property type="entry name" value="ATP-grasp"/>
</dbReference>
<dbReference type="InterPro" id="IPR013650">
    <property type="entry name" value="ATP-grasp_succ-CoA_synth-type"/>
</dbReference>
<dbReference type="InterPro" id="IPR013815">
    <property type="entry name" value="ATP_grasp_subdomain_1"/>
</dbReference>
<dbReference type="InterPro" id="IPR017866">
    <property type="entry name" value="Succ-CoA_synthase_bsu_CS"/>
</dbReference>
<dbReference type="InterPro" id="IPR005811">
    <property type="entry name" value="SUCC_ACL_C"/>
</dbReference>
<dbReference type="InterPro" id="IPR005809">
    <property type="entry name" value="Succ_CoA_ligase-like_bsu"/>
</dbReference>
<dbReference type="InterPro" id="IPR016102">
    <property type="entry name" value="Succinyl-CoA_synth-like"/>
</dbReference>
<dbReference type="NCBIfam" id="NF001913">
    <property type="entry name" value="PRK00696.1"/>
    <property type="match status" value="1"/>
</dbReference>
<dbReference type="NCBIfam" id="TIGR01016">
    <property type="entry name" value="sucCoAbeta"/>
    <property type="match status" value="1"/>
</dbReference>
<dbReference type="PANTHER" id="PTHR11815:SF10">
    <property type="entry name" value="SUCCINATE--COA LIGASE [GDP-FORMING] SUBUNIT BETA, MITOCHONDRIAL"/>
    <property type="match status" value="1"/>
</dbReference>
<dbReference type="PANTHER" id="PTHR11815">
    <property type="entry name" value="SUCCINYL-COA SYNTHETASE BETA CHAIN"/>
    <property type="match status" value="1"/>
</dbReference>
<dbReference type="Pfam" id="PF08442">
    <property type="entry name" value="ATP-grasp_2"/>
    <property type="match status" value="1"/>
</dbReference>
<dbReference type="Pfam" id="PF00549">
    <property type="entry name" value="Ligase_CoA"/>
    <property type="match status" value="1"/>
</dbReference>
<dbReference type="PIRSF" id="PIRSF001554">
    <property type="entry name" value="SucCS_beta"/>
    <property type="match status" value="1"/>
</dbReference>
<dbReference type="SUPFAM" id="SSF56059">
    <property type="entry name" value="Glutathione synthetase ATP-binding domain-like"/>
    <property type="match status" value="1"/>
</dbReference>
<dbReference type="SUPFAM" id="SSF52210">
    <property type="entry name" value="Succinyl-CoA synthetase domains"/>
    <property type="match status" value="1"/>
</dbReference>
<dbReference type="PROSITE" id="PS50975">
    <property type="entry name" value="ATP_GRASP"/>
    <property type="match status" value="1"/>
</dbReference>
<dbReference type="PROSITE" id="PS01217">
    <property type="entry name" value="SUCCINYL_COA_LIG_3"/>
    <property type="match status" value="1"/>
</dbReference>
<name>SUCC_PSEU2</name>
<reference key="1">
    <citation type="journal article" date="2005" name="Proc. Natl. Acad. Sci. U.S.A.">
        <title>Comparison of the complete genome sequences of Pseudomonas syringae pv. syringae B728a and pv. tomato DC3000.</title>
        <authorList>
            <person name="Feil H."/>
            <person name="Feil W.S."/>
            <person name="Chain P."/>
            <person name="Larimer F."/>
            <person name="Dibartolo G."/>
            <person name="Copeland A."/>
            <person name="Lykidis A."/>
            <person name="Trong S."/>
            <person name="Nolan M."/>
            <person name="Goltsman E."/>
            <person name="Thiel J."/>
            <person name="Malfatti S."/>
            <person name="Loper J.E."/>
            <person name="Lapidus A."/>
            <person name="Detter J.C."/>
            <person name="Land M."/>
            <person name="Richardson P.M."/>
            <person name="Kyrpides N.C."/>
            <person name="Ivanova N."/>
            <person name="Lindow S.E."/>
        </authorList>
    </citation>
    <scope>NUCLEOTIDE SEQUENCE [LARGE SCALE GENOMIC DNA]</scope>
    <source>
        <strain>B728a</strain>
    </source>
</reference>
<sequence>MNLHEYQGKQLFAEYGLPVSKGYAVDTPEAAAEACDKIGGTEWVVKAQVHAGGRGKAGGVKLVRSKEDAAAFAQQWLGKRLVTYQTDANGQPVTKILVESCTDIAKELYLGAVVDRSSRRIVFMASTEGGVDIEKIAHDTPEKILKATIDPLVGAQPFQGRDLAFQLGLEGKQVTQFAKIFTGLAKLFQDHDLALLEVNPLVIKADGDLHCLDAKINIDANAMYRQPKLKGFHDPSQDDPREAHAAKFELNYVALEGNIGCMVNGAGLAMGTMDIVNLHGGKPANFLDVGGGATKERVTEAFKIILSDANVAAVLVNIFGGIVRCDMIAEGIIGAVKEVGVKIPVVVRLEGNNAELGAKVLAESGLNIIAATSLTDAAQQVVKAAEGK</sequence>
<proteinExistence type="inferred from homology"/>
<gene>
    <name evidence="1" type="primary">sucC</name>
    <name type="ordered locus">Psyr_2012</name>
</gene>
<keyword id="KW-0067">ATP-binding</keyword>
<keyword id="KW-0436">Ligase</keyword>
<keyword id="KW-0460">Magnesium</keyword>
<keyword id="KW-0479">Metal-binding</keyword>
<keyword id="KW-0547">Nucleotide-binding</keyword>
<keyword id="KW-0816">Tricarboxylic acid cycle</keyword>
<organism>
    <name type="scientific">Pseudomonas syringae pv. syringae (strain B728a)</name>
    <dbReference type="NCBI Taxonomy" id="205918"/>
    <lineage>
        <taxon>Bacteria</taxon>
        <taxon>Pseudomonadati</taxon>
        <taxon>Pseudomonadota</taxon>
        <taxon>Gammaproteobacteria</taxon>
        <taxon>Pseudomonadales</taxon>
        <taxon>Pseudomonadaceae</taxon>
        <taxon>Pseudomonas</taxon>
        <taxon>Pseudomonas syringae</taxon>
    </lineage>
</organism>
<accession>Q4ZUW7</accession>